<keyword id="KW-0001">2Fe-2S</keyword>
<keyword id="KW-0028">Amino-acid biosynthesis</keyword>
<keyword id="KW-0100">Branched-chain amino acid biosynthesis</keyword>
<keyword id="KW-0408">Iron</keyword>
<keyword id="KW-0411">Iron-sulfur</keyword>
<keyword id="KW-0456">Lyase</keyword>
<keyword id="KW-0460">Magnesium</keyword>
<keyword id="KW-0479">Metal-binding</keyword>
<proteinExistence type="inferred from homology"/>
<sequence length="612" mass="65251">MPEYRSKTSTHGRNMAGARALWRATGMKDGDFHKPIIAIANSFTQFVPGHVHLKDLGQLVAREIERVGGVAKEFDTIAVDDGIAMGHDGMLYSLPSREIIADSVEYMVNAHCADALVCISNCDKITPGMLMAALRLNIPTVFVSGGPMEAGKTKLADHNLDLIDAMVIAADDSASDEKVAEFERSACPTCGSCSGMFTANSMNCLTEALGLSLPGNGTVVATHADREQLFLRAGRVAVELCHRWYGGEDPTALPRGIATFEAFENAMTLDIAMGGSTNTILHLLAAAQEGEVPFGMRDIDRLSKRVPQLCKVAPNTPKYHIEDVHRAGGIMSILGELARGGLLHTNAATVHTRTLADAIAQWDVTQVDDDKVHTFYKAGPAGIPTQIAFSQATRWDTLDTDRSEGCIRDVAHAFSQEGGLAVLYGNIARDGCVVKTAGVDESIHVFEGNARVYESQDSAVKGILADEVKAGDVVVIRYEGPKGGPGMQEMLYPTSYLKSKGLGKHCALLTDGRFSGGTSGLSIGHASPEAAAGGAIGLVRNGDKILIDIPKRSIDLLVSDEELAARRTEQDAKGWKPVEVRPRKVTTALKAYALLATSADKGAVRDKAMLDG</sequence>
<protein>
    <recommendedName>
        <fullName evidence="1">Dihydroxy-acid dehydratase</fullName>
        <shortName evidence="1">DAD</shortName>
        <ecNumber evidence="1">4.2.1.9</ecNumber>
    </recommendedName>
</protein>
<comment type="function">
    <text evidence="1">Functions in the biosynthesis of branched-chain amino acids. Catalyzes the dehydration of (2R,3R)-2,3-dihydroxy-3-methylpentanoate (2,3-dihydroxy-3-methylvalerate) into 2-oxo-3-methylpentanoate (2-oxo-3-methylvalerate) and of (2R)-2,3-dihydroxy-3-methylbutanoate (2,3-dihydroxyisovalerate) into 2-oxo-3-methylbutanoate (2-oxoisovalerate), the penultimate precursor to L-isoleucine and L-valine, respectively.</text>
</comment>
<comment type="catalytic activity">
    <reaction evidence="1">
        <text>(2R)-2,3-dihydroxy-3-methylbutanoate = 3-methyl-2-oxobutanoate + H2O</text>
        <dbReference type="Rhea" id="RHEA:24809"/>
        <dbReference type="ChEBI" id="CHEBI:11851"/>
        <dbReference type="ChEBI" id="CHEBI:15377"/>
        <dbReference type="ChEBI" id="CHEBI:49072"/>
        <dbReference type="EC" id="4.2.1.9"/>
    </reaction>
    <physiologicalReaction direction="left-to-right" evidence="1">
        <dbReference type="Rhea" id="RHEA:24810"/>
    </physiologicalReaction>
</comment>
<comment type="catalytic activity">
    <reaction evidence="1">
        <text>(2R,3R)-2,3-dihydroxy-3-methylpentanoate = (S)-3-methyl-2-oxopentanoate + H2O</text>
        <dbReference type="Rhea" id="RHEA:27694"/>
        <dbReference type="ChEBI" id="CHEBI:15377"/>
        <dbReference type="ChEBI" id="CHEBI:35146"/>
        <dbReference type="ChEBI" id="CHEBI:49258"/>
        <dbReference type="EC" id="4.2.1.9"/>
    </reaction>
    <physiologicalReaction direction="left-to-right" evidence="1">
        <dbReference type="Rhea" id="RHEA:27695"/>
    </physiologicalReaction>
</comment>
<comment type="cofactor">
    <cofactor evidence="1">
        <name>[2Fe-2S] cluster</name>
        <dbReference type="ChEBI" id="CHEBI:190135"/>
    </cofactor>
    <text evidence="1">Binds 1 [2Fe-2S] cluster per subunit. This cluster acts as a Lewis acid cofactor.</text>
</comment>
<comment type="cofactor">
    <cofactor evidence="1">
        <name>Mg(2+)</name>
        <dbReference type="ChEBI" id="CHEBI:18420"/>
    </cofactor>
</comment>
<comment type="pathway">
    <text evidence="1">Amino-acid biosynthesis; L-isoleucine biosynthesis; L-isoleucine from 2-oxobutanoate: step 3/4.</text>
</comment>
<comment type="pathway">
    <text evidence="1">Amino-acid biosynthesis; L-valine biosynthesis; L-valine from pyruvate: step 3/4.</text>
</comment>
<comment type="subunit">
    <text evidence="1">Homodimer.</text>
</comment>
<comment type="similarity">
    <text evidence="1">Belongs to the IlvD/Edd family.</text>
</comment>
<evidence type="ECO:0000255" key="1">
    <source>
        <dbReference type="HAMAP-Rule" id="MF_00012"/>
    </source>
</evidence>
<organism>
    <name type="scientific">Xanthomonas campestris pv. campestris (strain B100)</name>
    <dbReference type="NCBI Taxonomy" id="509169"/>
    <lineage>
        <taxon>Bacteria</taxon>
        <taxon>Pseudomonadati</taxon>
        <taxon>Pseudomonadota</taxon>
        <taxon>Gammaproteobacteria</taxon>
        <taxon>Lysobacterales</taxon>
        <taxon>Lysobacteraceae</taxon>
        <taxon>Xanthomonas</taxon>
    </lineage>
</organism>
<gene>
    <name evidence="1" type="primary">ilvD</name>
    <name type="ordered locus">xcc-b100_0370</name>
</gene>
<feature type="chain" id="PRO_1000089429" description="Dihydroxy-acid dehydratase">
    <location>
        <begin position="1"/>
        <end position="612"/>
    </location>
</feature>
<feature type="active site" description="Proton acceptor" evidence="1">
    <location>
        <position position="515"/>
    </location>
</feature>
<feature type="binding site" evidence="1">
    <location>
        <position position="81"/>
    </location>
    <ligand>
        <name>Mg(2+)</name>
        <dbReference type="ChEBI" id="CHEBI:18420"/>
    </ligand>
</feature>
<feature type="binding site" evidence="1">
    <location>
        <position position="122"/>
    </location>
    <ligand>
        <name>[2Fe-2S] cluster</name>
        <dbReference type="ChEBI" id="CHEBI:190135"/>
    </ligand>
</feature>
<feature type="binding site" evidence="1">
    <location>
        <position position="123"/>
    </location>
    <ligand>
        <name>Mg(2+)</name>
        <dbReference type="ChEBI" id="CHEBI:18420"/>
    </ligand>
</feature>
<feature type="binding site" description="via carbamate group" evidence="1">
    <location>
        <position position="124"/>
    </location>
    <ligand>
        <name>Mg(2+)</name>
        <dbReference type="ChEBI" id="CHEBI:18420"/>
    </ligand>
</feature>
<feature type="binding site" evidence="1">
    <location>
        <position position="193"/>
    </location>
    <ligand>
        <name>[2Fe-2S] cluster</name>
        <dbReference type="ChEBI" id="CHEBI:190135"/>
    </ligand>
</feature>
<feature type="binding site" evidence="1">
    <location>
        <position position="489"/>
    </location>
    <ligand>
        <name>Mg(2+)</name>
        <dbReference type="ChEBI" id="CHEBI:18420"/>
    </ligand>
</feature>
<feature type="modified residue" description="N6-carboxylysine" evidence="1">
    <location>
        <position position="124"/>
    </location>
</feature>
<dbReference type="EC" id="4.2.1.9" evidence="1"/>
<dbReference type="EMBL" id="AM920689">
    <property type="protein sequence ID" value="CAP49701.1"/>
    <property type="molecule type" value="Genomic_DNA"/>
</dbReference>
<dbReference type="SMR" id="B0RMB4"/>
<dbReference type="KEGG" id="xca:xcc-b100_0370"/>
<dbReference type="HOGENOM" id="CLU_014271_4_2_6"/>
<dbReference type="UniPathway" id="UPA00047">
    <property type="reaction ID" value="UER00057"/>
</dbReference>
<dbReference type="UniPathway" id="UPA00049">
    <property type="reaction ID" value="UER00061"/>
</dbReference>
<dbReference type="Proteomes" id="UP000001188">
    <property type="component" value="Chromosome"/>
</dbReference>
<dbReference type="GO" id="GO:0005829">
    <property type="term" value="C:cytosol"/>
    <property type="evidence" value="ECO:0007669"/>
    <property type="project" value="TreeGrafter"/>
</dbReference>
<dbReference type="GO" id="GO:0051537">
    <property type="term" value="F:2 iron, 2 sulfur cluster binding"/>
    <property type="evidence" value="ECO:0007669"/>
    <property type="project" value="UniProtKB-UniRule"/>
</dbReference>
<dbReference type="GO" id="GO:0004160">
    <property type="term" value="F:dihydroxy-acid dehydratase activity"/>
    <property type="evidence" value="ECO:0007669"/>
    <property type="project" value="UniProtKB-UniRule"/>
</dbReference>
<dbReference type="GO" id="GO:0000287">
    <property type="term" value="F:magnesium ion binding"/>
    <property type="evidence" value="ECO:0007669"/>
    <property type="project" value="UniProtKB-UniRule"/>
</dbReference>
<dbReference type="GO" id="GO:0009097">
    <property type="term" value="P:isoleucine biosynthetic process"/>
    <property type="evidence" value="ECO:0007669"/>
    <property type="project" value="UniProtKB-UniRule"/>
</dbReference>
<dbReference type="GO" id="GO:0009099">
    <property type="term" value="P:L-valine biosynthetic process"/>
    <property type="evidence" value="ECO:0007669"/>
    <property type="project" value="UniProtKB-UniRule"/>
</dbReference>
<dbReference type="FunFam" id="3.50.30.80:FF:000001">
    <property type="entry name" value="Dihydroxy-acid dehydratase"/>
    <property type="match status" value="1"/>
</dbReference>
<dbReference type="Gene3D" id="3.50.30.80">
    <property type="entry name" value="IlvD/EDD C-terminal domain-like"/>
    <property type="match status" value="1"/>
</dbReference>
<dbReference type="HAMAP" id="MF_00012">
    <property type="entry name" value="IlvD"/>
    <property type="match status" value="1"/>
</dbReference>
<dbReference type="InterPro" id="IPR042096">
    <property type="entry name" value="Dihydro-acid_dehy_C"/>
</dbReference>
<dbReference type="InterPro" id="IPR004404">
    <property type="entry name" value="DihydroxyA_deHydtase"/>
</dbReference>
<dbReference type="InterPro" id="IPR020558">
    <property type="entry name" value="DiOHA_6PGluconate_deHydtase_CS"/>
</dbReference>
<dbReference type="InterPro" id="IPR056740">
    <property type="entry name" value="ILV_EDD_C"/>
</dbReference>
<dbReference type="InterPro" id="IPR000581">
    <property type="entry name" value="ILV_EDD_N"/>
</dbReference>
<dbReference type="InterPro" id="IPR037237">
    <property type="entry name" value="IlvD/EDD_N"/>
</dbReference>
<dbReference type="NCBIfam" id="TIGR00110">
    <property type="entry name" value="ilvD"/>
    <property type="match status" value="1"/>
</dbReference>
<dbReference type="NCBIfam" id="NF009103">
    <property type="entry name" value="PRK12448.1"/>
    <property type="match status" value="1"/>
</dbReference>
<dbReference type="PANTHER" id="PTHR43661">
    <property type="entry name" value="D-XYLONATE DEHYDRATASE"/>
    <property type="match status" value="1"/>
</dbReference>
<dbReference type="PANTHER" id="PTHR43661:SF3">
    <property type="entry name" value="D-XYLONATE DEHYDRATASE YAGF-RELATED"/>
    <property type="match status" value="1"/>
</dbReference>
<dbReference type="Pfam" id="PF24877">
    <property type="entry name" value="ILV_EDD_C"/>
    <property type="match status" value="1"/>
</dbReference>
<dbReference type="Pfam" id="PF00920">
    <property type="entry name" value="ILVD_EDD_N"/>
    <property type="match status" value="1"/>
</dbReference>
<dbReference type="SUPFAM" id="SSF143975">
    <property type="entry name" value="IlvD/EDD N-terminal domain-like"/>
    <property type="match status" value="1"/>
</dbReference>
<dbReference type="SUPFAM" id="SSF52016">
    <property type="entry name" value="LeuD/IlvD-like"/>
    <property type="match status" value="1"/>
</dbReference>
<dbReference type="PROSITE" id="PS00886">
    <property type="entry name" value="ILVD_EDD_1"/>
    <property type="match status" value="1"/>
</dbReference>
<dbReference type="PROSITE" id="PS00887">
    <property type="entry name" value="ILVD_EDD_2"/>
    <property type="match status" value="1"/>
</dbReference>
<reference key="1">
    <citation type="journal article" date="2008" name="J. Biotechnol.">
        <title>The genome of Xanthomonas campestris pv. campestris B100 and its use for the reconstruction of metabolic pathways involved in xanthan biosynthesis.</title>
        <authorList>
            <person name="Vorhoelter F.-J."/>
            <person name="Schneiker S."/>
            <person name="Goesmann A."/>
            <person name="Krause L."/>
            <person name="Bekel T."/>
            <person name="Kaiser O."/>
            <person name="Linke B."/>
            <person name="Patschkowski T."/>
            <person name="Rueckert C."/>
            <person name="Schmid J."/>
            <person name="Sidhu V.K."/>
            <person name="Sieber V."/>
            <person name="Tauch A."/>
            <person name="Watt S.A."/>
            <person name="Weisshaar B."/>
            <person name="Becker A."/>
            <person name="Niehaus K."/>
            <person name="Puehler A."/>
        </authorList>
    </citation>
    <scope>NUCLEOTIDE SEQUENCE [LARGE SCALE GENOMIC DNA]</scope>
    <source>
        <strain>B100</strain>
    </source>
</reference>
<name>ILVD_XANCB</name>
<accession>B0RMB4</accession>